<sequence length="498" mass="52581">MSDQLQTTDLSRVHMVGIGGAGMSGIARILLDRGYQVSGSDMKESRSIMALRAAGAQIQVGHAEDNLRLSGEMPTVVVTSFAAIPQDNPELVGAREAGIPVLRRSDILALLLQDRRAFLLAGTHGKTSTTSMAVAALQAAGQDPSFAIGGQLNRAGTNAHNGTGEVFVAEADESDGSFLSYSPEIAVVTNIEPDHLDYFKTESAYREVFEKFAHRIVPGGFLVVCLDDPGSAALAEELIAGAEEGNPLPFTVVGYGTAEGCDAHPSVPPAAIIESTEVTAEGTVSALRLTEEVKKAAEEAAGTYSLRVAIPGIHMVLNAAAAVLGSVLLGADVDKVIAGIGGFDGVRRRFEYHGTRQDVEVYDDYAHHPTEVAAVLAAARQRVEARGGRIVAVFQPHLYSRTMNFADEFAEALSLADQVVLLDIFGAREEPVEGVDSRIIGNKIDASTDWVFEPDFSKVSSVVAGLVQPGDMVLTIGAGTVTMLADEILLELDRGDRG</sequence>
<keyword id="KW-0067">ATP-binding</keyword>
<keyword id="KW-0131">Cell cycle</keyword>
<keyword id="KW-0132">Cell division</keyword>
<keyword id="KW-0133">Cell shape</keyword>
<keyword id="KW-0961">Cell wall biogenesis/degradation</keyword>
<keyword id="KW-0963">Cytoplasm</keyword>
<keyword id="KW-0436">Ligase</keyword>
<keyword id="KW-0547">Nucleotide-binding</keyword>
<keyword id="KW-0573">Peptidoglycan synthesis</keyword>
<keyword id="KW-1185">Reference proteome</keyword>
<evidence type="ECO:0000255" key="1">
    <source>
        <dbReference type="HAMAP-Rule" id="MF_00046"/>
    </source>
</evidence>
<dbReference type="EC" id="6.3.2.8" evidence="1"/>
<dbReference type="EMBL" id="CR931997">
    <property type="protein sequence ID" value="CAI36913.1"/>
    <property type="molecule type" value="Genomic_DNA"/>
</dbReference>
<dbReference type="RefSeq" id="WP_011273364.1">
    <property type="nucleotide sequence ID" value="NC_007164.1"/>
</dbReference>
<dbReference type="SMR" id="Q4JW94"/>
<dbReference type="STRING" id="306537.jk0751"/>
<dbReference type="KEGG" id="cjk:jk0751"/>
<dbReference type="PATRIC" id="fig|306537.10.peg.759"/>
<dbReference type="eggNOG" id="COG0773">
    <property type="taxonomic scope" value="Bacteria"/>
</dbReference>
<dbReference type="HOGENOM" id="CLU_028104_2_2_11"/>
<dbReference type="OrthoDB" id="9804126at2"/>
<dbReference type="UniPathway" id="UPA00219"/>
<dbReference type="Proteomes" id="UP000000545">
    <property type="component" value="Chromosome"/>
</dbReference>
<dbReference type="GO" id="GO:0005737">
    <property type="term" value="C:cytoplasm"/>
    <property type="evidence" value="ECO:0007669"/>
    <property type="project" value="UniProtKB-SubCell"/>
</dbReference>
<dbReference type="GO" id="GO:0005524">
    <property type="term" value="F:ATP binding"/>
    <property type="evidence" value="ECO:0007669"/>
    <property type="project" value="UniProtKB-UniRule"/>
</dbReference>
<dbReference type="GO" id="GO:0008763">
    <property type="term" value="F:UDP-N-acetylmuramate-L-alanine ligase activity"/>
    <property type="evidence" value="ECO:0007669"/>
    <property type="project" value="UniProtKB-UniRule"/>
</dbReference>
<dbReference type="GO" id="GO:0051301">
    <property type="term" value="P:cell division"/>
    <property type="evidence" value="ECO:0007669"/>
    <property type="project" value="UniProtKB-KW"/>
</dbReference>
<dbReference type="GO" id="GO:0071555">
    <property type="term" value="P:cell wall organization"/>
    <property type="evidence" value="ECO:0007669"/>
    <property type="project" value="UniProtKB-KW"/>
</dbReference>
<dbReference type="GO" id="GO:0009252">
    <property type="term" value="P:peptidoglycan biosynthetic process"/>
    <property type="evidence" value="ECO:0007669"/>
    <property type="project" value="UniProtKB-UniRule"/>
</dbReference>
<dbReference type="GO" id="GO:0008360">
    <property type="term" value="P:regulation of cell shape"/>
    <property type="evidence" value="ECO:0007669"/>
    <property type="project" value="UniProtKB-KW"/>
</dbReference>
<dbReference type="FunFam" id="3.40.50.720:FF:000046">
    <property type="entry name" value="UDP-N-acetylmuramate--L-alanine ligase"/>
    <property type="match status" value="1"/>
</dbReference>
<dbReference type="Gene3D" id="3.90.190.20">
    <property type="entry name" value="Mur ligase, C-terminal domain"/>
    <property type="match status" value="1"/>
</dbReference>
<dbReference type="Gene3D" id="3.40.1190.10">
    <property type="entry name" value="Mur-like, catalytic domain"/>
    <property type="match status" value="1"/>
</dbReference>
<dbReference type="Gene3D" id="3.40.50.720">
    <property type="entry name" value="NAD(P)-binding Rossmann-like Domain"/>
    <property type="match status" value="1"/>
</dbReference>
<dbReference type="HAMAP" id="MF_00046">
    <property type="entry name" value="MurC"/>
    <property type="match status" value="1"/>
</dbReference>
<dbReference type="InterPro" id="IPR036565">
    <property type="entry name" value="Mur-like_cat_sf"/>
</dbReference>
<dbReference type="InterPro" id="IPR004101">
    <property type="entry name" value="Mur_ligase_C"/>
</dbReference>
<dbReference type="InterPro" id="IPR036615">
    <property type="entry name" value="Mur_ligase_C_dom_sf"/>
</dbReference>
<dbReference type="InterPro" id="IPR013221">
    <property type="entry name" value="Mur_ligase_cen"/>
</dbReference>
<dbReference type="InterPro" id="IPR000713">
    <property type="entry name" value="Mur_ligase_N"/>
</dbReference>
<dbReference type="InterPro" id="IPR050061">
    <property type="entry name" value="MurCDEF_pg_biosynth"/>
</dbReference>
<dbReference type="InterPro" id="IPR005758">
    <property type="entry name" value="UDP-N-AcMur_Ala_ligase_MurC"/>
</dbReference>
<dbReference type="NCBIfam" id="TIGR01082">
    <property type="entry name" value="murC"/>
    <property type="match status" value="1"/>
</dbReference>
<dbReference type="PANTHER" id="PTHR43445:SF3">
    <property type="entry name" value="UDP-N-ACETYLMURAMATE--L-ALANINE LIGASE"/>
    <property type="match status" value="1"/>
</dbReference>
<dbReference type="PANTHER" id="PTHR43445">
    <property type="entry name" value="UDP-N-ACETYLMURAMATE--L-ALANINE LIGASE-RELATED"/>
    <property type="match status" value="1"/>
</dbReference>
<dbReference type="Pfam" id="PF01225">
    <property type="entry name" value="Mur_ligase"/>
    <property type="match status" value="1"/>
</dbReference>
<dbReference type="Pfam" id="PF02875">
    <property type="entry name" value="Mur_ligase_C"/>
    <property type="match status" value="1"/>
</dbReference>
<dbReference type="Pfam" id="PF08245">
    <property type="entry name" value="Mur_ligase_M"/>
    <property type="match status" value="1"/>
</dbReference>
<dbReference type="SUPFAM" id="SSF51984">
    <property type="entry name" value="MurCD N-terminal domain"/>
    <property type="match status" value="1"/>
</dbReference>
<dbReference type="SUPFAM" id="SSF53623">
    <property type="entry name" value="MurD-like peptide ligases, catalytic domain"/>
    <property type="match status" value="1"/>
</dbReference>
<dbReference type="SUPFAM" id="SSF53244">
    <property type="entry name" value="MurD-like peptide ligases, peptide-binding domain"/>
    <property type="match status" value="1"/>
</dbReference>
<organism>
    <name type="scientific">Corynebacterium jeikeium (strain K411)</name>
    <dbReference type="NCBI Taxonomy" id="306537"/>
    <lineage>
        <taxon>Bacteria</taxon>
        <taxon>Bacillati</taxon>
        <taxon>Actinomycetota</taxon>
        <taxon>Actinomycetes</taxon>
        <taxon>Mycobacteriales</taxon>
        <taxon>Corynebacteriaceae</taxon>
        <taxon>Corynebacterium</taxon>
    </lineage>
</organism>
<comment type="function">
    <text evidence="1">Cell wall formation.</text>
</comment>
<comment type="catalytic activity">
    <reaction evidence="1">
        <text>UDP-N-acetyl-alpha-D-muramate + L-alanine + ATP = UDP-N-acetyl-alpha-D-muramoyl-L-alanine + ADP + phosphate + H(+)</text>
        <dbReference type="Rhea" id="RHEA:23372"/>
        <dbReference type="ChEBI" id="CHEBI:15378"/>
        <dbReference type="ChEBI" id="CHEBI:30616"/>
        <dbReference type="ChEBI" id="CHEBI:43474"/>
        <dbReference type="ChEBI" id="CHEBI:57972"/>
        <dbReference type="ChEBI" id="CHEBI:70757"/>
        <dbReference type="ChEBI" id="CHEBI:83898"/>
        <dbReference type="ChEBI" id="CHEBI:456216"/>
        <dbReference type="EC" id="6.3.2.8"/>
    </reaction>
</comment>
<comment type="pathway">
    <text evidence="1">Cell wall biogenesis; peptidoglycan biosynthesis.</text>
</comment>
<comment type="subcellular location">
    <subcellularLocation>
        <location evidence="1">Cytoplasm</location>
    </subcellularLocation>
</comment>
<comment type="similarity">
    <text evidence="1">Belongs to the MurCDEF family.</text>
</comment>
<accession>Q4JW94</accession>
<feature type="chain" id="PRO_0000242553" description="UDP-N-acetylmuramate--L-alanine ligase">
    <location>
        <begin position="1"/>
        <end position="498"/>
    </location>
</feature>
<feature type="binding site" evidence="1">
    <location>
        <begin position="122"/>
        <end position="128"/>
    </location>
    <ligand>
        <name>ATP</name>
        <dbReference type="ChEBI" id="CHEBI:30616"/>
    </ligand>
</feature>
<proteinExistence type="inferred from homology"/>
<reference key="1">
    <citation type="journal article" date="2005" name="J. Bacteriol.">
        <title>Complete genome sequence and analysis of the multiresistant nosocomial pathogen Corynebacterium jeikeium K411, a lipid-requiring bacterium of the human skin flora.</title>
        <authorList>
            <person name="Tauch A."/>
            <person name="Kaiser O."/>
            <person name="Hain T."/>
            <person name="Goesmann A."/>
            <person name="Weisshaar B."/>
            <person name="Albersmeier A."/>
            <person name="Bekel T."/>
            <person name="Bischoff N."/>
            <person name="Brune I."/>
            <person name="Chakraborty T."/>
            <person name="Kalinowski J."/>
            <person name="Meyer F."/>
            <person name="Rupp O."/>
            <person name="Schneiker S."/>
            <person name="Viehoever P."/>
            <person name="Puehler A."/>
        </authorList>
    </citation>
    <scope>NUCLEOTIDE SEQUENCE [LARGE SCALE GENOMIC DNA]</scope>
    <source>
        <strain>K411</strain>
    </source>
</reference>
<protein>
    <recommendedName>
        <fullName evidence="1">UDP-N-acetylmuramate--L-alanine ligase</fullName>
        <ecNumber evidence="1">6.3.2.8</ecNumber>
    </recommendedName>
    <alternativeName>
        <fullName evidence="1">UDP-N-acetylmuramoyl-L-alanine synthetase</fullName>
    </alternativeName>
</protein>
<name>MURC_CORJK</name>
<gene>
    <name evidence="1" type="primary">murC</name>
    <name type="ordered locus">jk0751</name>
</gene>